<accession>Q3UTH8</accession>
<accession>B1AXI3</accession>
<accession>B1AXI5</accession>
<accession>B9EJ88</accession>
<accession>Q3TQ60</accession>
<accession>Q80U06</accession>
<accession>Q8CAF9</accession>
<gene>
    <name type="primary">Arhgef9</name>
    <name type="synonym">Kiaa0424</name>
</gene>
<sequence length="516" mass="60927">MYDLITGDSIVSAEAVWDHVTMANRELAFKAGDVIKVLDASNKDWWWGQIDDEEGWFPASFVRLWVNQEDGVEEGPSDVQNGHLDPNSDCLCLGRPLQNRDQMRANVINEIMSTERHYIKHLKDICEGYLKQCRKRRDMFSDEQLKVIFGNIEDIYRFQMGFVRDLEKQYNNDDPHLSEIGPCFLEHQDGFWIYSEYCNNHLDACMELSKLMKDSRYQHFFEACRLLQQMIDIAIDGFLLTPVQKICKYPLQLAELLKYTAQDHSDYRYVAAALAVMRNVTQQINERKRRLENIDKIAQWQASVLDWEGEDILDRSSELIYTGEMAWIYQPYGRNQQRVFFLFDHQMVLCKKDLIRRDILYYKGRIDMDKYEVIDIEDGRDDDFNVSMKNAFKLHNKETEEVHLFFAKKLEEKIRWLRAFREERKMVQEDEKIGFEISENQKRQAAMTVRKASKQKGVNSARSVPPSYPPPQDPLNQGQYLVPDGIAQSQVFEFTEPKRSQSPFWQNFSRLTPFKK</sequence>
<feature type="chain" id="PRO_0000253896" description="Rho guanine nucleotide exchange factor 9">
    <location>
        <begin position="1"/>
        <end position="516"/>
    </location>
</feature>
<feature type="domain" description="SH3" evidence="5">
    <location>
        <begin position="8"/>
        <end position="67"/>
    </location>
</feature>
<feature type="domain" description="DH" evidence="3">
    <location>
        <begin position="103"/>
        <end position="287"/>
    </location>
</feature>
<feature type="domain" description="PH" evidence="4">
    <location>
        <begin position="318"/>
        <end position="425"/>
    </location>
</feature>
<feature type="region of interest" description="Interaction with GPHN" evidence="1">
    <location>
        <begin position="100"/>
        <end position="110"/>
    </location>
</feature>
<feature type="region of interest" description="Disordered" evidence="6">
    <location>
        <begin position="450"/>
        <end position="480"/>
    </location>
</feature>
<feature type="modified residue" description="Phosphoserine" evidence="12">
    <location>
        <position position="502"/>
    </location>
</feature>
<feature type="splice variant" id="VSP_021143" description="In isoform 2." evidence="9">
    <location>
        <begin position="1"/>
        <end position="21"/>
    </location>
</feature>
<feature type="splice variant" id="VSP_021144" description="In isoform 3." evidence="10">
    <original>MYD</original>
    <variation>MQWIRGGTGM</variation>
    <location>
        <begin position="1"/>
        <end position="3"/>
    </location>
</feature>
<feature type="splice variant" id="VSP_021145" description="In isoform 4." evidence="10">
    <original>MYD</original>
    <variation>MTL</variation>
    <location>
        <begin position="1"/>
        <end position="3"/>
    </location>
</feature>
<feature type="splice variant" id="VSP_021146" description="In isoform 3." evidence="10">
    <original>VNSARSVPPSYPPPQDPLNQGQYLVPDGIAQSQVFEFTEPKRSQSPFWQNFSRLTPFKK</original>
    <variation>TSAFTPPNPLTVCVGLGNHGVCVFTFLGSFLY</variation>
    <location>
        <begin position="458"/>
        <end position="516"/>
    </location>
</feature>
<name>ARHG9_MOUSE</name>
<keyword id="KW-0025">Alternative splicing</keyword>
<keyword id="KW-0963">Cytoplasm</keyword>
<keyword id="KW-0344">Guanine-nucleotide releasing factor</keyword>
<keyword id="KW-0597">Phosphoprotein</keyword>
<keyword id="KW-1185">Reference proteome</keyword>
<keyword id="KW-0728">SH3 domain</keyword>
<keyword id="KW-0770">Synapse</keyword>
<evidence type="ECO:0000250" key="1"/>
<evidence type="ECO:0000250" key="2">
    <source>
        <dbReference type="UniProtKB" id="Q9QX73"/>
    </source>
</evidence>
<evidence type="ECO:0000255" key="3">
    <source>
        <dbReference type="PROSITE-ProRule" id="PRU00062"/>
    </source>
</evidence>
<evidence type="ECO:0000255" key="4">
    <source>
        <dbReference type="PROSITE-ProRule" id="PRU00145"/>
    </source>
</evidence>
<evidence type="ECO:0000255" key="5">
    <source>
        <dbReference type="PROSITE-ProRule" id="PRU00192"/>
    </source>
</evidence>
<evidence type="ECO:0000256" key="6">
    <source>
        <dbReference type="SAM" id="MobiDB-lite"/>
    </source>
</evidence>
<evidence type="ECO:0000269" key="7">
    <source>
    </source>
</evidence>
<evidence type="ECO:0000269" key="8">
    <source>
    </source>
</evidence>
<evidence type="ECO:0000303" key="9">
    <source>
    </source>
</evidence>
<evidence type="ECO:0000303" key="10">
    <source>
    </source>
</evidence>
<evidence type="ECO:0000305" key="11"/>
<evidence type="ECO:0007744" key="12">
    <source>
    </source>
</evidence>
<dbReference type="EMBL" id="AK122280">
    <property type="protein sequence ID" value="BAC65562.1"/>
    <property type="status" value="ALT_INIT"/>
    <property type="molecule type" value="mRNA"/>
</dbReference>
<dbReference type="EMBL" id="AK038840">
    <property type="protein sequence ID" value="BAC30147.2"/>
    <property type="status" value="ALT_TERM"/>
    <property type="molecule type" value="mRNA"/>
</dbReference>
<dbReference type="EMBL" id="AK163874">
    <property type="protein sequence ID" value="BAE37525.1"/>
    <property type="molecule type" value="mRNA"/>
</dbReference>
<dbReference type="EMBL" id="AK139416">
    <property type="protein sequence ID" value="BAE24002.1"/>
    <property type="molecule type" value="mRNA"/>
</dbReference>
<dbReference type="EMBL" id="AL807821">
    <property type="status" value="NOT_ANNOTATED_CDS"/>
    <property type="molecule type" value="Genomic_DNA"/>
</dbReference>
<dbReference type="EMBL" id="BX470092">
    <property type="status" value="NOT_ANNOTATED_CDS"/>
    <property type="molecule type" value="Genomic_DNA"/>
</dbReference>
<dbReference type="EMBL" id="BC141385">
    <property type="protein sequence ID" value="AAI41386.1"/>
    <property type="molecule type" value="mRNA"/>
</dbReference>
<dbReference type="CCDS" id="CCDS53137.1">
    <molecule id="Q3UTH8-1"/>
</dbReference>
<dbReference type="CCDS" id="CCDS72409.1">
    <molecule id="Q3UTH8-2"/>
</dbReference>
<dbReference type="RefSeq" id="NP_001028501.1">
    <molecule id="Q3UTH8-1"/>
    <property type="nucleotide sequence ID" value="NM_001033329.4"/>
</dbReference>
<dbReference type="RefSeq" id="NP_001277313.1">
    <molecule id="Q3UTH8-2"/>
    <property type="nucleotide sequence ID" value="NM_001290384.2"/>
</dbReference>
<dbReference type="RefSeq" id="NP_001277314.1">
    <molecule id="Q3UTH8-2"/>
    <property type="nucleotide sequence ID" value="NM_001290385.2"/>
</dbReference>
<dbReference type="RefSeq" id="NP_001392834.1">
    <molecule id="Q3UTH8-1"/>
    <property type="nucleotide sequence ID" value="NM_001405905.1"/>
</dbReference>
<dbReference type="RefSeq" id="NP_001392835.1">
    <molecule id="Q3UTH8-4"/>
    <property type="nucleotide sequence ID" value="NM_001405906.1"/>
</dbReference>
<dbReference type="RefSeq" id="NP_001392837.1">
    <molecule id="Q3UTH8-2"/>
    <property type="nucleotide sequence ID" value="NM_001405908.1"/>
</dbReference>
<dbReference type="RefSeq" id="NP_001392838.1">
    <molecule id="Q3UTH8-2"/>
    <property type="nucleotide sequence ID" value="NM_001405909.1"/>
</dbReference>
<dbReference type="RefSeq" id="XP_011245884.1">
    <property type="nucleotide sequence ID" value="XM_011247582.2"/>
</dbReference>
<dbReference type="RefSeq" id="XP_011245885.1">
    <property type="nucleotide sequence ID" value="XM_011247583.2"/>
</dbReference>
<dbReference type="RefSeq" id="XP_017173962.1">
    <property type="nucleotide sequence ID" value="XM_017318473.1"/>
</dbReference>
<dbReference type="BMRB" id="Q3UTH8"/>
<dbReference type="SMR" id="Q3UTH8"/>
<dbReference type="FunCoup" id="Q3UTH8">
    <property type="interactions" value="410"/>
</dbReference>
<dbReference type="IntAct" id="Q3UTH8">
    <property type="interactions" value="2"/>
</dbReference>
<dbReference type="MINT" id="Q3UTH8"/>
<dbReference type="STRING" id="10090.ENSMUSP00000109510"/>
<dbReference type="iPTMnet" id="Q3UTH8"/>
<dbReference type="PhosphoSitePlus" id="Q3UTH8"/>
<dbReference type="PaxDb" id="10090-ENSMUSP00000109516"/>
<dbReference type="PeptideAtlas" id="Q3UTH8"/>
<dbReference type="ProteomicsDB" id="273926">
    <molecule id="Q3UTH8-1"/>
</dbReference>
<dbReference type="ProteomicsDB" id="273927">
    <molecule id="Q3UTH8-2"/>
</dbReference>
<dbReference type="ProteomicsDB" id="273928">
    <molecule id="Q3UTH8-3"/>
</dbReference>
<dbReference type="ProteomicsDB" id="273929">
    <molecule id="Q3UTH8-4"/>
</dbReference>
<dbReference type="ABCD" id="Q3UTH8">
    <property type="antibodies" value="2 sequenced antibodies"/>
</dbReference>
<dbReference type="Antibodypedia" id="27024">
    <property type="antibodies" value="180 antibodies from 30 providers"/>
</dbReference>
<dbReference type="Ensembl" id="ENSMUST00000113876.9">
    <molecule id="Q3UTH8-2"/>
    <property type="protein sequence ID" value="ENSMUSP00000109508.2"/>
    <property type="gene ID" value="ENSMUSG00000025656.18"/>
</dbReference>
<dbReference type="Ensembl" id="ENSMUST00000113878.8">
    <molecule id="Q3UTH8-1"/>
    <property type="protein sequence ID" value="ENSMUSP00000109510.2"/>
    <property type="gene ID" value="ENSMUSG00000025656.18"/>
</dbReference>
<dbReference type="Ensembl" id="ENSMUST00000113882.8">
    <molecule id="Q3UTH8-4"/>
    <property type="protein sequence ID" value="ENSMUSP00000109514.2"/>
    <property type="gene ID" value="ENSMUSG00000025656.18"/>
</dbReference>
<dbReference type="Ensembl" id="ENSMUST00000113883.8">
    <molecule id="Q3UTH8-4"/>
    <property type="protein sequence ID" value="ENSMUSP00000109515.2"/>
    <property type="gene ID" value="ENSMUSG00000025656.18"/>
</dbReference>
<dbReference type="Ensembl" id="ENSMUST00000181987.8">
    <molecule id="Q3UTH8-3"/>
    <property type="protein sequence ID" value="ENSMUSP00000138461.2"/>
    <property type="gene ID" value="ENSMUSG00000025656.18"/>
</dbReference>
<dbReference type="Ensembl" id="ENSMUST00000182001.8">
    <molecule id="Q3UTH8-2"/>
    <property type="protein sequence ID" value="ENSMUSP00000138668.2"/>
    <property type="gene ID" value="ENSMUSG00000025656.18"/>
</dbReference>
<dbReference type="Ensembl" id="ENSMUST00000199920.5">
    <molecule id="Q3UTH8-2"/>
    <property type="protein sequence ID" value="ENSMUSP00000143779.2"/>
    <property type="gene ID" value="ENSMUSG00000025656.18"/>
</dbReference>
<dbReference type="GeneID" id="236915"/>
<dbReference type="KEGG" id="mmu:236915"/>
<dbReference type="UCSC" id="uc009ttt.2">
    <molecule id="Q3UTH8-1"/>
    <property type="organism name" value="mouse"/>
</dbReference>
<dbReference type="UCSC" id="uc009ttv.1">
    <molecule id="Q3UTH8-3"/>
    <property type="organism name" value="mouse"/>
</dbReference>
<dbReference type="AGR" id="MGI:2442233"/>
<dbReference type="CTD" id="23229"/>
<dbReference type="MGI" id="MGI:2442233">
    <property type="gene designation" value="Arhgef9"/>
</dbReference>
<dbReference type="VEuPathDB" id="HostDB:ENSMUSG00000025656"/>
<dbReference type="eggNOG" id="KOG3519">
    <property type="taxonomic scope" value="Eukaryota"/>
</dbReference>
<dbReference type="GeneTree" id="ENSGT00940000154103"/>
<dbReference type="HOGENOM" id="CLU_008436_2_1_1"/>
<dbReference type="InParanoid" id="Q3UTH8"/>
<dbReference type="OMA" id="EXFEISE"/>
<dbReference type="PhylomeDB" id="Q3UTH8"/>
<dbReference type="Reactome" id="R-MMU-193648">
    <property type="pathway name" value="NRAGE signals death through JNK"/>
</dbReference>
<dbReference type="Reactome" id="R-MMU-416482">
    <property type="pathway name" value="G alpha (12/13) signalling events"/>
</dbReference>
<dbReference type="Reactome" id="R-MMU-9013148">
    <property type="pathway name" value="CDC42 GTPase cycle"/>
</dbReference>
<dbReference type="Reactome" id="R-MMU-9013406">
    <property type="pathway name" value="RHOQ GTPase cycle"/>
</dbReference>
<dbReference type="Reactome" id="R-MMU-977443">
    <property type="pathway name" value="GABA receptor activation"/>
</dbReference>
<dbReference type="BioGRID-ORCS" id="236915">
    <property type="hits" value="5 hits in 77 CRISPR screens"/>
</dbReference>
<dbReference type="CD-CODE" id="CE726F99">
    <property type="entry name" value="Postsynaptic density"/>
</dbReference>
<dbReference type="ChiTaRS" id="Arhgef9">
    <property type="organism name" value="mouse"/>
</dbReference>
<dbReference type="PRO" id="PR:Q3UTH8"/>
<dbReference type="Proteomes" id="UP000000589">
    <property type="component" value="Chromosome X"/>
</dbReference>
<dbReference type="RNAct" id="Q3UTH8">
    <property type="molecule type" value="protein"/>
</dbReference>
<dbReference type="Bgee" id="ENSMUSG00000025656">
    <property type="expression patterns" value="Expressed in superior frontal gyrus and 147 other cell types or tissues"/>
</dbReference>
<dbReference type="ExpressionAtlas" id="Q3UTH8">
    <property type="expression patterns" value="baseline and differential"/>
</dbReference>
<dbReference type="GO" id="GO:0005938">
    <property type="term" value="C:cell cortex"/>
    <property type="evidence" value="ECO:0000304"/>
    <property type="project" value="MGI"/>
</dbReference>
<dbReference type="GO" id="GO:0098982">
    <property type="term" value="C:GABA-ergic synapse"/>
    <property type="evidence" value="ECO:0000314"/>
    <property type="project" value="SynGO"/>
</dbReference>
<dbReference type="GO" id="GO:0014069">
    <property type="term" value="C:postsynaptic density"/>
    <property type="evidence" value="ECO:0000314"/>
    <property type="project" value="UniProtKB"/>
</dbReference>
<dbReference type="GO" id="GO:0005085">
    <property type="term" value="F:guanyl-nucleotide exchange factor activity"/>
    <property type="evidence" value="ECO:0000304"/>
    <property type="project" value="MGI"/>
</dbReference>
<dbReference type="GO" id="GO:0099150">
    <property type="term" value="P:regulation of postsynaptic specialization assembly"/>
    <property type="evidence" value="ECO:0000314"/>
    <property type="project" value="SynGO"/>
</dbReference>
<dbReference type="GO" id="GO:0007264">
    <property type="term" value="P:small GTPase-mediated signal transduction"/>
    <property type="evidence" value="ECO:0000304"/>
    <property type="project" value="MGI"/>
</dbReference>
<dbReference type="CDD" id="cd01224">
    <property type="entry name" value="PH_Collybistin_ASEF"/>
    <property type="match status" value="1"/>
</dbReference>
<dbReference type="CDD" id="cd00160">
    <property type="entry name" value="RhoGEF"/>
    <property type="match status" value="1"/>
</dbReference>
<dbReference type="CDD" id="cd11975">
    <property type="entry name" value="SH3_ARHGEF9"/>
    <property type="match status" value="1"/>
</dbReference>
<dbReference type="FunFam" id="1.20.900.10:FF:000002">
    <property type="entry name" value="Rho guanine nucleotide exchange factor 9"/>
    <property type="match status" value="1"/>
</dbReference>
<dbReference type="FunFam" id="2.30.29.30:FF:000015">
    <property type="entry name" value="Rho guanine nucleotide exchange factor 9"/>
    <property type="match status" value="1"/>
</dbReference>
<dbReference type="FunFam" id="2.30.30.40:FF:000037">
    <property type="entry name" value="Rho guanine nucleotide exchange factor 9"/>
    <property type="match status" value="1"/>
</dbReference>
<dbReference type="Gene3D" id="1.20.900.10">
    <property type="entry name" value="Dbl homology (DH) domain"/>
    <property type="match status" value="1"/>
</dbReference>
<dbReference type="Gene3D" id="2.30.29.30">
    <property type="entry name" value="Pleckstrin-homology domain (PH domain)/Phosphotyrosine-binding domain (PTB)"/>
    <property type="match status" value="1"/>
</dbReference>
<dbReference type="Gene3D" id="2.30.30.40">
    <property type="entry name" value="SH3 Domains"/>
    <property type="match status" value="1"/>
</dbReference>
<dbReference type="InterPro" id="IPR035728">
    <property type="entry name" value="ARHGEF9_SH3"/>
</dbReference>
<dbReference type="InterPro" id="IPR035899">
    <property type="entry name" value="DBL_dom_sf"/>
</dbReference>
<dbReference type="InterPro" id="IPR000219">
    <property type="entry name" value="DH_dom"/>
</dbReference>
<dbReference type="InterPro" id="IPR011993">
    <property type="entry name" value="PH-like_dom_sf"/>
</dbReference>
<dbReference type="InterPro" id="IPR001849">
    <property type="entry name" value="PH_domain"/>
</dbReference>
<dbReference type="InterPro" id="IPR036028">
    <property type="entry name" value="SH3-like_dom_sf"/>
</dbReference>
<dbReference type="InterPro" id="IPR001452">
    <property type="entry name" value="SH3_domain"/>
</dbReference>
<dbReference type="InterPro" id="IPR055251">
    <property type="entry name" value="SOS1_NGEF_PH"/>
</dbReference>
<dbReference type="PANTHER" id="PTHR47544">
    <property type="entry name" value="RHO GUANINE NUCLEOTIDE EXCHANGE FACTOR 4"/>
    <property type="match status" value="1"/>
</dbReference>
<dbReference type="PANTHER" id="PTHR47544:SF4">
    <property type="entry name" value="RHO GUANINE NUCLEOTIDE EXCHANGE FACTOR 9"/>
    <property type="match status" value="1"/>
</dbReference>
<dbReference type="Pfam" id="PF00621">
    <property type="entry name" value="RhoGEF"/>
    <property type="match status" value="1"/>
</dbReference>
<dbReference type="Pfam" id="PF07653">
    <property type="entry name" value="SH3_2"/>
    <property type="match status" value="1"/>
</dbReference>
<dbReference type="Pfam" id="PF22697">
    <property type="entry name" value="SOS1_NGEF_PH"/>
    <property type="match status" value="1"/>
</dbReference>
<dbReference type="SMART" id="SM00233">
    <property type="entry name" value="PH"/>
    <property type="match status" value="1"/>
</dbReference>
<dbReference type="SMART" id="SM00325">
    <property type="entry name" value="RhoGEF"/>
    <property type="match status" value="1"/>
</dbReference>
<dbReference type="SMART" id="SM00326">
    <property type="entry name" value="SH3"/>
    <property type="match status" value="1"/>
</dbReference>
<dbReference type="SUPFAM" id="SSF48065">
    <property type="entry name" value="DBL homology domain (DH-domain)"/>
    <property type="match status" value="1"/>
</dbReference>
<dbReference type="SUPFAM" id="SSF50729">
    <property type="entry name" value="PH domain-like"/>
    <property type="match status" value="1"/>
</dbReference>
<dbReference type="SUPFAM" id="SSF50044">
    <property type="entry name" value="SH3-domain"/>
    <property type="match status" value="1"/>
</dbReference>
<dbReference type="PROSITE" id="PS50010">
    <property type="entry name" value="DH_2"/>
    <property type="match status" value="1"/>
</dbReference>
<dbReference type="PROSITE" id="PS50003">
    <property type="entry name" value="PH_DOMAIN"/>
    <property type="match status" value="1"/>
</dbReference>
<dbReference type="PROSITE" id="PS50002">
    <property type="entry name" value="SH3"/>
    <property type="match status" value="1"/>
</dbReference>
<protein>
    <recommendedName>
        <fullName>Rho guanine nucleotide exchange factor 9</fullName>
    </recommendedName>
    <alternativeName>
        <fullName>Collybistin</fullName>
    </alternativeName>
    <alternativeName>
        <fullName>Rac/Cdc42 guanine nucleotide exchange factor 9</fullName>
    </alternativeName>
</protein>
<reference key="1">
    <citation type="journal article" date="2003" name="DNA Res.">
        <title>Prediction of the coding sequences of mouse homologues of KIAA gene: II. The complete nucleotide sequences of 400 mouse KIAA-homologous cDNAs identified by screening of terminal sequences of cDNA clones randomly sampled from size-fractionated libraries.</title>
        <authorList>
            <person name="Okazaki N."/>
            <person name="Kikuno R."/>
            <person name="Ohara R."/>
            <person name="Inamoto S."/>
            <person name="Aizawa H."/>
            <person name="Yuasa S."/>
            <person name="Nakajima D."/>
            <person name="Nagase T."/>
            <person name="Ohara O."/>
            <person name="Koga H."/>
        </authorList>
    </citation>
    <scope>NUCLEOTIDE SEQUENCE [LARGE SCALE MRNA] (ISOFORM 2)</scope>
    <source>
        <tissue>Brain</tissue>
    </source>
</reference>
<reference key="2">
    <citation type="journal article" date="2005" name="Science">
        <title>The transcriptional landscape of the mammalian genome.</title>
        <authorList>
            <person name="Carninci P."/>
            <person name="Kasukawa T."/>
            <person name="Katayama S."/>
            <person name="Gough J."/>
            <person name="Frith M.C."/>
            <person name="Maeda N."/>
            <person name="Oyama R."/>
            <person name="Ravasi T."/>
            <person name="Lenhard B."/>
            <person name="Wells C."/>
            <person name="Kodzius R."/>
            <person name="Shimokawa K."/>
            <person name="Bajic V.B."/>
            <person name="Brenner S.E."/>
            <person name="Batalov S."/>
            <person name="Forrest A.R."/>
            <person name="Zavolan M."/>
            <person name="Davis M.J."/>
            <person name="Wilming L.G."/>
            <person name="Aidinis V."/>
            <person name="Allen J.E."/>
            <person name="Ambesi-Impiombato A."/>
            <person name="Apweiler R."/>
            <person name="Aturaliya R.N."/>
            <person name="Bailey T.L."/>
            <person name="Bansal M."/>
            <person name="Baxter L."/>
            <person name="Beisel K.W."/>
            <person name="Bersano T."/>
            <person name="Bono H."/>
            <person name="Chalk A.M."/>
            <person name="Chiu K.P."/>
            <person name="Choudhary V."/>
            <person name="Christoffels A."/>
            <person name="Clutterbuck D.R."/>
            <person name="Crowe M.L."/>
            <person name="Dalla E."/>
            <person name="Dalrymple B.P."/>
            <person name="de Bono B."/>
            <person name="Della Gatta G."/>
            <person name="di Bernardo D."/>
            <person name="Down T."/>
            <person name="Engstrom P."/>
            <person name="Fagiolini M."/>
            <person name="Faulkner G."/>
            <person name="Fletcher C.F."/>
            <person name="Fukushima T."/>
            <person name="Furuno M."/>
            <person name="Futaki S."/>
            <person name="Gariboldi M."/>
            <person name="Georgii-Hemming P."/>
            <person name="Gingeras T.R."/>
            <person name="Gojobori T."/>
            <person name="Green R.E."/>
            <person name="Gustincich S."/>
            <person name="Harbers M."/>
            <person name="Hayashi Y."/>
            <person name="Hensch T.K."/>
            <person name="Hirokawa N."/>
            <person name="Hill D."/>
            <person name="Huminiecki L."/>
            <person name="Iacono M."/>
            <person name="Ikeo K."/>
            <person name="Iwama A."/>
            <person name="Ishikawa T."/>
            <person name="Jakt M."/>
            <person name="Kanapin A."/>
            <person name="Katoh M."/>
            <person name="Kawasawa Y."/>
            <person name="Kelso J."/>
            <person name="Kitamura H."/>
            <person name="Kitano H."/>
            <person name="Kollias G."/>
            <person name="Krishnan S.P."/>
            <person name="Kruger A."/>
            <person name="Kummerfeld S.K."/>
            <person name="Kurochkin I.V."/>
            <person name="Lareau L.F."/>
            <person name="Lazarevic D."/>
            <person name="Lipovich L."/>
            <person name="Liu J."/>
            <person name="Liuni S."/>
            <person name="McWilliam S."/>
            <person name="Madan Babu M."/>
            <person name="Madera M."/>
            <person name="Marchionni L."/>
            <person name="Matsuda H."/>
            <person name="Matsuzawa S."/>
            <person name="Miki H."/>
            <person name="Mignone F."/>
            <person name="Miyake S."/>
            <person name="Morris K."/>
            <person name="Mottagui-Tabar S."/>
            <person name="Mulder N."/>
            <person name="Nakano N."/>
            <person name="Nakauchi H."/>
            <person name="Ng P."/>
            <person name="Nilsson R."/>
            <person name="Nishiguchi S."/>
            <person name="Nishikawa S."/>
            <person name="Nori F."/>
            <person name="Ohara O."/>
            <person name="Okazaki Y."/>
            <person name="Orlando V."/>
            <person name="Pang K.C."/>
            <person name="Pavan W.J."/>
            <person name="Pavesi G."/>
            <person name="Pesole G."/>
            <person name="Petrovsky N."/>
            <person name="Piazza S."/>
            <person name="Reed J."/>
            <person name="Reid J.F."/>
            <person name="Ring B.Z."/>
            <person name="Ringwald M."/>
            <person name="Rost B."/>
            <person name="Ruan Y."/>
            <person name="Salzberg S.L."/>
            <person name="Sandelin A."/>
            <person name="Schneider C."/>
            <person name="Schoenbach C."/>
            <person name="Sekiguchi K."/>
            <person name="Semple C.A."/>
            <person name="Seno S."/>
            <person name="Sessa L."/>
            <person name="Sheng Y."/>
            <person name="Shibata Y."/>
            <person name="Shimada H."/>
            <person name="Shimada K."/>
            <person name="Silva D."/>
            <person name="Sinclair B."/>
            <person name="Sperling S."/>
            <person name="Stupka E."/>
            <person name="Sugiura K."/>
            <person name="Sultana R."/>
            <person name="Takenaka Y."/>
            <person name="Taki K."/>
            <person name="Tammoja K."/>
            <person name="Tan S.L."/>
            <person name="Tang S."/>
            <person name="Taylor M.S."/>
            <person name="Tegner J."/>
            <person name="Teichmann S.A."/>
            <person name="Ueda H.R."/>
            <person name="van Nimwegen E."/>
            <person name="Verardo R."/>
            <person name="Wei C.L."/>
            <person name="Yagi K."/>
            <person name="Yamanishi H."/>
            <person name="Zabarovsky E."/>
            <person name="Zhu S."/>
            <person name="Zimmer A."/>
            <person name="Hide W."/>
            <person name="Bult C."/>
            <person name="Grimmond S.M."/>
            <person name="Teasdale R.D."/>
            <person name="Liu E.T."/>
            <person name="Brusic V."/>
            <person name="Quackenbush J."/>
            <person name="Wahlestedt C."/>
            <person name="Mattick J.S."/>
            <person name="Hume D.A."/>
            <person name="Kai C."/>
            <person name="Sasaki D."/>
            <person name="Tomaru Y."/>
            <person name="Fukuda S."/>
            <person name="Kanamori-Katayama M."/>
            <person name="Suzuki M."/>
            <person name="Aoki J."/>
            <person name="Arakawa T."/>
            <person name="Iida J."/>
            <person name="Imamura K."/>
            <person name="Itoh M."/>
            <person name="Kato T."/>
            <person name="Kawaji H."/>
            <person name="Kawagashira N."/>
            <person name="Kawashima T."/>
            <person name="Kojima M."/>
            <person name="Kondo S."/>
            <person name="Konno H."/>
            <person name="Nakano K."/>
            <person name="Ninomiya N."/>
            <person name="Nishio T."/>
            <person name="Okada M."/>
            <person name="Plessy C."/>
            <person name="Shibata K."/>
            <person name="Shiraki T."/>
            <person name="Suzuki S."/>
            <person name="Tagami M."/>
            <person name="Waki K."/>
            <person name="Watahiki A."/>
            <person name="Okamura-Oho Y."/>
            <person name="Suzuki H."/>
            <person name="Kawai J."/>
            <person name="Hayashizaki Y."/>
        </authorList>
    </citation>
    <scope>NUCLEOTIDE SEQUENCE [LARGE SCALE MRNA] (ISOFORMS 1; 3 AND 4)</scope>
    <source>
        <strain>C57BL/6J</strain>
        <tissue>Brain cortex</tissue>
        <tissue>Cerebellum</tissue>
        <tissue>Hypothalamus</tissue>
    </source>
</reference>
<reference key="3">
    <citation type="journal article" date="2009" name="PLoS Biol.">
        <title>Lineage-specific biology revealed by a finished genome assembly of the mouse.</title>
        <authorList>
            <person name="Church D.M."/>
            <person name="Goodstadt L."/>
            <person name="Hillier L.W."/>
            <person name="Zody M.C."/>
            <person name="Goldstein S."/>
            <person name="She X."/>
            <person name="Bult C.J."/>
            <person name="Agarwala R."/>
            <person name="Cherry J.L."/>
            <person name="DiCuccio M."/>
            <person name="Hlavina W."/>
            <person name="Kapustin Y."/>
            <person name="Meric P."/>
            <person name="Maglott D."/>
            <person name="Birtle Z."/>
            <person name="Marques A.C."/>
            <person name="Graves T."/>
            <person name="Zhou S."/>
            <person name="Teague B."/>
            <person name="Potamousis K."/>
            <person name="Churas C."/>
            <person name="Place M."/>
            <person name="Herschleb J."/>
            <person name="Runnheim R."/>
            <person name="Forrest D."/>
            <person name="Amos-Landgraf J."/>
            <person name="Schwartz D.C."/>
            <person name="Cheng Z."/>
            <person name="Lindblad-Toh K."/>
            <person name="Eichler E.E."/>
            <person name="Ponting C.P."/>
        </authorList>
    </citation>
    <scope>NUCLEOTIDE SEQUENCE [LARGE SCALE GENOMIC DNA]</scope>
    <source>
        <strain>C57BL/6J</strain>
    </source>
</reference>
<reference key="4">
    <citation type="journal article" date="2004" name="Genome Res.">
        <title>The status, quality, and expansion of the NIH full-length cDNA project: the Mammalian Gene Collection (MGC).</title>
        <authorList>
            <consortium name="The MGC Project Team"/>
        </authorList>
    </citation>
    <scope>NUCLEOTIDE SEQUENCE [LARGE SCALE MRNA] (ISOFORM 1)</scope>
    <source>
        <tissue>Brain</tissue>
    </source>
</reference>
<reference key="5">
    <citation type="journal article" date="2001" name="Eur. J. Neurosci.">
        <title>Distribution of transcripts for the brain-specific GDP/GTP exchange factor collybistin in the developing mouse brain.</title>
        <authorList>
            <person name="Kneussel M."/>
            <person name="Engelkamp D."/>
            <person name="Betz H."/>
        </authorList>
    </citation>
    <scope>TISSUE SPECIFICITY</scope>
</reference>
<reference key="6">
    <citation type="journal article" date="2010" name="Cell">
        <title>A tissue-specific atlas of mouse protein phosphorylation and expression.</title>
        <authorList>
            <person name="Huttlin E.L."/>
            <person name="Jedrychowski M.P."/>
            <person name="Elias J.E."/>
            <person name="Goswami T."/>
            <person name="Rad R."/>
            <person name="Beausoleil S.A."/>
            <person name="Villen J."/>
            <person name="Haas W."/>
            <person name="Sowa M.E."/>
            <person name="Gygi S.P."/>
        </authorList>
    </citation>
    <scope>PHOSPHORYLATION [LARGE SCALE ANALYSIS] AT SER-502</scope>
    <scope>IDENTIFICATION BY MASS SPECTROMETRY [LARGE SCALE ANALYSIS]</scope>
    <source>
        <tissue>Brain</tissue>
    </source>
</reference>
<reference key="7">
    <citation type="journal article" date="2016" name="Science">
        <title>Identification of an elaborate complex mediating postsynaptic inhibition.</title>
        <authorList>
            <person name="Uezu A."/>
            <person name="Kanak D.J."/>
            <person name="Bradshaw T.W."/>
            <person name="Soderblom E.J."/>
            <person name="Catavero C.M."/>
            <person name="Burette A.C."/>
            <person name="Weinberg R.J."/>
            <person name="Soderling S.H."/>
        </authorList>
    </citation>
    <scope>SUBCELLULAR LOCATION</scope>
</reference>
<organism>
    <name type="scientific">Mus musculus</name>
    <name type="common">Mouse</name>
    <dbReference type="NCBI Taxonomy" id="10090"/>
    <lineage>
        <taxon>Eukaryota</taxon>
        <taxon>Metazoa</taxon>
        <taxon>Chordata</taxon>
        <taxon>Craniata</taxon>
        <taxon>Vertebrata</taxon>
        <taxon>Euteleostomi</taxon>
        <taxon>Mammalia</taxon>
        <taxon>Eutheria</taxon>
        <taxon>Euarchontoglires</taxon>
        <taxon>Glires</taxon>
        <taxon>Rodentia</taxon>
        <taxon>Myomorpha</taxon>
        <taxon>Muroidea</taxon>
        <taxon>Muridae</taxon>
        <taxon>Murinae</taxon>
        <taxon>Mus</taxon>
        <taxon>Mus</taxon>
    </lineage>
</organism>
<comment type="function">
    <text evidence="2">Acts as a guanine nucleotide exchange factor (GEF) for CDC42. Promotes formation of GPHN clusters (By similarity).</text>
</comment>
<comment type="subunit">
    <text evidence="2">Interacts with GPHN.</text>
</comment>
<comment type="subcellular location">
    <subcellularLocation>
        <location evidence="2">Cytoplasm</location>
    </subcellularLocation>
    <subcellularLocation>
        <location evidence="8">Postsynaptic density</location>
    </subcellularLocation>
</comment>
<comment type="alternative products">
    <event type="alternative splicing"/>
    <isoform>
        <id>Q3UTH8-1</id>
        <name>1</name>
        <sequence type="displayed"/>
    </isoform>
    <isoform>
        <id>Q3UTH8-2</id>
        <name>2</name>
        <sequence type="described" ref="VSP_021143"/>
    </isoform>
    <isoform>
        <id>Q3UTH8-3</id>
        <name>3</name>
        <sequence type="described" ref="VSP_021144 VSP_021146"/>
    </isoform>
    <isoform>
        <id>Q3UTH8-4</id>
        <name>4</name>
        <sequence type="described" ref="VSP_021145"/>
    </isoform>
</comment>
<comment type="tissue specificity">
    <text evidence="7">Detected in embryonic and adult brain.</text>
</comment>
<comment type="sequence caution" evidence="11">
    <conflict type="erroneous initiation">
        <sequence resource="EMBL-CDS" id="BAC65562"/>
    </conflict>
    <text>Extended N-terminus.</text>
</comment>
<proteinExistence type="evidence at protein level"/>